<proteinExistence type="evidence at protein level"/>
<keyword id="KW-0597">Phosphoprotein</keyword>
<keyword id="KW-1185">Reference proteome</keyword>
<keyword id="KW-0677">Repeat</keyword>
<keyword id="KW-0727">SH2 domain</keyword>
<keyword id="KW-0728">SH3 domain</keyword>
<organism>
    <name type="scientific">Mus musculus</name>
    <name type="common">Mouse</name>
    <dbReference type="NCBI Taxonomy" id="10090"/>
    <lineage>
        <taxon>Eukaryota</taxon>
        <taxon>Metazoa</taxon>
        <taxon>Chordata</taxon>
        <taxon>Craniata</taxon>
        <taxon>Vertebrata</taxon>
        <taxon>Euteleostomi</taxon>
        <taxon>Mammalia</taxon>
        <taxon>Eutheria</taxon>
        <taxon>Euarchontoglires</taxon>
        <taxon>Glires</taxon>
        <taxon>Rodentia</taxon>
        <taxon>Myomorpha</taxon>
        <taxon>Muroidea</taxon>
        <taxon>Muridae</taxon>
        <taxon>Murinae</taxon>
        <taxon>Mus</taxon>
        <taxon>Mus</taxon>
    </lineage>
</organism>
<reference key="1">
    <citation type="journal article" date="1995" name="Oncogene">
        <title>Tyrosine phosphorylation of murine Crkl.</title>
        <authorList>
            <person name="de Jong R.L."/>
            <person name="Haataja L."/>
            <person name="Voncken J.W."/>
            <person name="Heisterkamp N."/>
            <person name="Groffen J."/>
        </authorList>
    </citation>
    <scope>NUCLEOTIDE SEQUENCE [MRNA]</scope>
    <source>
        <strain>C57BL X CBA</strain>
        <tissue>Placenta</tissue>
    </source>
</reference>
<reference key="2">
    <citation type="journal article" date="2005" name="Science">
        <title>The transcriptional landscape of the mammalian genome.</title>
        <authorList>
            <person name="Carninci P."/>
            <person name="Kasukawa T."/>
            <person name="Katayama S."/>
            <person name="Gough J."/>
            <person name="Frith M.C."/>
            <person name="Maeda N."/>
            <person name="Oyama R."/>
            <person name="Ravasi T."/>
            <person name="Lenhard B."/>
            <person name="Wells C."/>
            <person name="Kodzius R."/>
            <person name="Shimokawa K."/>
            <person name="Bajic V.B."/>
            <person name="Brenner S.E."/>
            <person name="Batalov S."/>
            <person name="Forrest A.R."/>
            <person name="Zavolan M."/>
            <person name="Davis M.J."/>
            <person name="Wilming L.G."/>
            <person name="Aidinis V."/>
            <person name="Allen J.E."/>
            <person name="Ambesi-Impiombato A."/>
            <person name="Apweiler R."/>
            <person name="Aturaliya R.N."/>
            <person name="Bailey T.L."/>
            <person name="Bansal M."/>
            <person name="Baxter L."/>
            <person name="Beisel K.W."/>
            <person name="Bersano T."/>
            <person name="Bono H."/>
            <person name="Chalk A.M."/>
            <person name="Chiu K.P."/>
            <person name="Choudhary V."/>
            <person name="Christoffels A."/>
            <person name="Clutterbuck D.R."/>
            <person name="Crowe M.L."/>
            <person name="Dalla E."/>
            <person name="Dalrymple B.P."/>
            <person name="de Bono B."/>
            <person name="Della Gatta G."/>
            <person name="di Bernardo D."/>
            <person name="Down T."/>
            <person name="Engstrom P."/>
            <person name="Fagiolini M."/>
            <person name="Faulkner G."/>
            <person name="Fletcher C.F."/>
            <person name="Fukushima T."/>
            <person name="Furuno M."/>
            <person name="Futaki S."/>
            <person name="Gariboldi M."/>
            <person name="Georgii-Hemming P."/>
            <person name="Gingeras T.R."/>
            <person name="Gojobori T."/>
            <person name="Green R.E."/>
            <person name="Gustincich S."/>
            <person name="Harbers M."/>
            <person name="Hayashi Y."/>
            <person name="Hensch T.K."/>
            <person name="Hirokawa N."/>
            <person name="Hill D."/>
            <person name="Huminiecki L."/>
            <person name="Iacono M."/>
            <person name="Ikeo K."/>
            <person name="Iwama A."/>
            <person name="Ishikawa T."/>
            <person name="Jakt M."/>
            <person name="Kanapin A."/>
            <person name="Katoh M."/>
            <person name="Kawasawa Y."/>
            <person name="Kelso J."/>
            <person name="Kitamura H."/>
            <person name="Kitano H."/>
            <person name="Kollias G."/>
            <person name="Krishnan S.P."/>
            <person name="Kruger A."/>
            <person name="Kummerfeld S.K."/>
            <person name="Kurochkin I.V."/>
            <person name="Lareau L.F."/>
            <person name="Lazarevic D."/>
            <person name="Lipovich L."/>
            <person name="Liu J."/>
            <person name="Liuni S."/>
            <person name="McWilliam S."/>
            <person name="Madan Babu M."/>
            <person name="Madera M."/>
            <person name="Marchionni L."/>
            <person name="Matsuda H."/>
            <person name="Matsuzawa S."/>
            <person name="Miki H."/>
            <person name="Mignone F."/>
            <person name="Miyake S."/>
            <person name="Morris K."/>
            <person name="Mottagui-Tabar S."/>
            <person name="Mulder N."/>
            <person name="Nakano N."/>
            <person name="Nakauchi H."/>
            <person name="Ng P."/>
            <person name="Nilsson R."/>
            <person name="Nishiguchi S."/>
            <person name="Nishikawa S."/>
            <person name="Nori F."/>
            <person name="Ohara O."/>
            <person name="Okazaki Y."/>
            <person name="Orlando V."/>
            <person name="Pang K.C."/>
            <person name="Pavan W.J."/>
            <person name="Pavesi G."/>
            <person name="Pesole G."/>
            <person name="Petrovsky N."/>
            <person name="Piazza S."/>
            <person name="Reed J."/>
            <person name="Reid J.F."/>
            <person name="Ring B.Z."/>
            <person name="Ringwald M."/>
            <person name="Rost B."/>
            <person name="Ruan Y."/>
            <person name="Salzberg S.L."/>
            <person name="Sandelin A."/>
            <person name="Schneider C."/>
            <person name="Schoenbach C."/>
            <person name="Sekiguchi K."/>
            <person name="Semple C.A."/>
            <person name="Seno S."/>
            <person name="Sessa L."/>
            <person name="Sheng Y."/>
            <person name="Shibata Y."/>
            <person name="Shimada H."/>
            <person name="Shimada K."/>
            <person name="Silva D."/>
            <person name="Sinclair B."/>
            <person name="Sperling S."/>
            <person name="Stupka E."/>
            <person name="Sugiura K."/>
            <person name="Sultana R."/>
            <person name="Takenaka Y."/>
            <person name="Taki K."/>
            <person name="Tammoja K."/>
            <person name="Tan S.L."/>
            <person name="Tang S."/>
            <person name="Taylor M.S."/>
            <person name="Tegner J."/>
            <person name="Teichmann S.A."/>
            <person name="Ueda H.R."/>
            <person name="van Nimwegen E."/>
            <person name="Verardo R."/>
            <person name="Wei C.L."/>
            <person name="Yagi K."/>
            <person name="Yamanishi H."/>
            <person name="Zabarovsky E."/>
            <person name="Zhu S."/>
            <person name="Zimmer A."/>
            <person name="Hide W."/>
            <person name="Bult C."/>
            <person name="Grimmond S.M."/>
            <person name="Teasdale R.D."/>
            <person name="Liu E.T."/>
            <person name="Brusic V."/>
            <person name="Quackenbush J."/>
            <person name="Wahlestedt C."/>
            <person name="Mattick J.S."/>
            <person name="Hume D.A."/>
            <person name="Kai C."/>
            <person name="Sasaki D."/>
            <person name="Tomaru Y."/>
            <person name="Fukuda S."/>
            <person name="Kanamori-Katayama M."/>
            <person name="Suzuki M."/>
            <person name="Aoki J."/>
            <person name="Arakawa T."/>
            <person name="Iida J."/>
            <person name="Imamura K."/>
            <person name="Itoh M."/>
            <person name="Kato T."/>
            <person name="Kawaji H."/>
            <person name="Kawagashira N."/>
            <person name="Kawashima T."/>
            <person name="Kojima M."/>
            <person name="Kondo S."/>
            <person name="Konno H."/>
            <person name="Nakano K."/>
            <person name="Ninomiya N."/>
            <person name="Nishio T."/>
            <person name="Okada M."/>
            <person name="Plessy C."/>
            <person name="Shibata K."/>
            <person name="Shiraki T."/>
            <person name="Suzuki S."/>
            <person name="Tagami M."/>
            <person name="Waki K."/>
            <person name="Watahiki A."/>
            <person name="Okamura-Oho Y."/>
            <person name="Suzuki H."/>
            <person name="Kawai J."/>
            <person name="Hayashizaki Y."/>
        </authorList>
    </citation>
    <scope>NUCLEOTIDE SEQUENCE [LARGE SCALE MRNA]</scope>
    <source>
        <strain>C57BL/6J</strain>
        <tissue>Embryonic head</tissue>
        <tissue>Embryonic heart</tissue>
    </source>
</reference>
<reference key="3">
    <citation type="journal article" date="2001" name="J. Biol. Chem.">
        <title>SHIP1, an SH2 domain containing polyinositol-5-phosphatase, regulates migration through two critical tyrosine residues and forms a novel signaling complex with DOK1 and CRKL.</title>
        <authorList>
            <person name="Sattler M."/>
            <person name="Verma S."/>
            <person name="Pride Y.B."/>
            <person name="Salgia R."/>
            <person name="Rohrschneider L.R."/>
            <person name="Griffin J.D."/>
        </authorList>
    </citation>
    <scope>INTERACTION WITH INPP5D</scope>
</reference>
<reference key="4">
    <citation type="journal article" date="2004" name="Mol. Cell. Proteomics">
        <title>Phosphoproteomic analysis of the developing mouse brain.</title>
        <authorList>
            <person name="Ballif B.A."/>
            <person name="Villen J."/>
            <person name="Beausoleil S.A."/>
            <person name="Schwartz D."/>
            <person name="Gygi S.P."/>
        </authorList>
    </citation>
    <scope>IDENTIFICATION BY MASS SPECTROMETRY [LARGE SCALE ANALYSIS]</scope>
    <source>
        <tissue>Embryonic brain</tissue>
    </source>
</reference>
<reference key="5">
    <citation type="journal article" date="2008" name="J. Proteome Res.">
        <title>Large-scale identification and evolution indexing of tyrosine phosphorylation sites from murine brain.</title>
        <authorList>
            <person name="Ballif B.A."/>
            <person name="Carey G.R."/>
            <person name="Sunyaev S.R."/>
            <person name="Gygi S.P."/>
        </authorList>
    </citation>
    <scope>IDENTIFICATION BY MASS SPECTROMETRY [LARGE SCALE ANALYSIS]</scope>
    <source>
        <tissue>Brain</tissue>
    </source>
</reference>
<reference key="6">
    <citation type="journal article" date="2010" name="Cell">
        <title>A tissue-specific atlas of mouse protein phosphorylation and expression.</title>
        <authorList>
            <person name="Huttlin E.L."/>
            <person name="Jedrychowski M.P."/>
            <person name="Elias J.E."/>
            <person name="Goswami T."/>
            <person name="Rad R."/>
            <person name="Beausoleil S.A."/>
            <person name="Villen J."/>
            <person name="Haas W."/>
            <person name="Sowa M.E."/>
            <person name="Gygi S.P."/>
        </authorList>
    </citation>
    <scope>IDENTIFICATION BY MASS SPECTROMETRY [LARGE SCALE ANALYSIS]</scope>
    <source>
        <tissue>Brain</tissue>
        <tissue>Brown adipose tissue</tissue>
        <tissue>Heart</tissue>
        <tissue>Kidney</tissue>
        <tissue>Liver</tissue>
        <tissue>Lung</tissue>
        <tissue>Pancreas</tissue>
        <tissue>Spleen</tissue>
        <tissue>Testis</tissue>
    </source>
</reference>
<comment type="function">
    <text>May mediate the transduction of intracellular signals.</text>
</comment>
<comment type="subunit">
    <text evidence="1 5">Interacts with DOCK2 and EPOR. Interacts with phosphorylated CBLB and IRS4 (By similarity). Interacts with INPP5D/SHIP1 (PubMed:11031258). Interacts with BCAR1/CAS and NEDD9/HEF1 (By similarity).</text>
</comment>
<comment type="PTM">
    <text>Phosphorylated on tyrosine. Phosphorylation is prominent during early development, but decreases at later embryonic stages and in newborn mice.</text>
</comment>
<comment type="similarity">
    <text evidence="6">Belongs to the CRK family.</text>
</comment>
<protein>
    <recommendedName>
        <fullName>Crk-like protein</fullName>
    </recommendedName>
</protein>
<feature type="chain" id="PRO_0000079348" description="Crk-like protein">
    <location>
        <begin position="1"/>
        <end position="303"/>
    </location>
</feature>
<feature type="domain" description="SH2" evidence="2">
    <location>
        <begin position="14"/>
        <end position="102"/>
    </location>
</feature>
<feature type="domain" description="SH3 1" evidence="3">
    <location>
        <begin position="123"/>
        <end position="183"/>
    </location>
</feature>
<feature type="domain" description="SH3 2" evidence="3">
    <location>
        <begin position="235"/>
        <end position="296"/>
    </location>
</feature>
<feature type="region of interest" description="Disordered" evidence="4">
    <location>
        <begin position="184"/>
        <end position="203"/>
    </location>
</feature>
<feature type="modified residue" description="Phosphotyrosine" evidence="1">
    <location>
        <position position="127"/>
    </location>
</feature>
<feature type="modified residue" description="Phosphotyrosine" evidence="1">
    <location>
        <position position="207"/>
    </location>
</feature>
<feature type="sequence conflict" description="In Ref. 1; CAA62220." evidence="6" ref="1">
    <original>N</original>
    <variation>T</variation>
    <location>
        <position position="165"/>
    </location>
</feature>
<evidence type="ECO:0000250" key="1">
    <source>
        <dbReference type="UniProtKB" id="P46109"/>
    </source>
</evidence>
<evidence type="ECO:0000255" key="2">
    <source>
        <dbReference type="PROSITE-ProRule" id="PRU00191"/>
    </source>
</evidence>
<evidence type="ECO:0000255" key="3">
    <source>
        <dbReference type="PROSITE-ProRule" id="PRU00192"/>
    </source>
</evidence>
<evidence type="ECO:0000256" key="4">
    <source>
        <dbReference type="SAM" id="MobiDB-lite"/>
    </source>
</evidence>
<evidence type="ECO:0000269" key="5">
    <source>
    </source>
</evidence>
<evidence type="ECO:0000305" key="6"/>
<gene>
    <name type="primary">Crkl</name>
    <name type="synonym">Crkol</name>
</gene>
<accession>P47941</accession>
<accession>Q3TQ18</accession>
<accession>Q8BGC5</accession>
<sequence length="303" mass="33830">MSSARFDSSDRSAWYMGPVTRQEAQTRLQGQRHGMFLVRDSSTCPGDYVLSVSENSRVSHYIINSLPNRRFKIGDQEFDHLPALLEFYKIHYLDTTTLIEPAPRYPSPPVGSVSAPNLPTAEENLEYVRTLYDFPGNDAEDLPFKKGELLVIIEKPEEQWWSARNKDGRVGMIPVPYVEKLVRSSPHGKHGNRNSNSYGIPEPAHAYAQPQTTTPLPTVASTPGAAINPLPSTQNGPVFAKAIQKRVPCAYDKTALALEVGDIVKVTRMNINGQWEGEVNGRKGLFPFTHVKIFDPQNPDDNE</sequence>
<name>CRKL_MOUSE</name>
<dbReference type="EMBL" id="X90648">
    <property type="protein sequence ID" value="CAA62220.1"/>
    <property type="molecule type" value="mRNA"/>
</dbReference>
<dbReference type="EMBL" id="AK048641">
    <property type="protein sequence ID" value="BAC33406.1"/>
    <property type="molecule type" value="mRNA"/>
</dbReference>
<dbReference type="EMBL" id="AK052315">
    <property type="protein sequence ID" value="BAC34933.1"/>
    <property type="molecule type" value="mRNA"/>
</dbReference>
<dbReference type="EMBL" id="AK163981">
    <property type="protein sequence ID" value="BAE37567.1"/>
    <property type="molecule type" value="mRNA"/>
</dbReference>
<dbReference type="CCDS" id="CCDS28002.1"/>
<dbReference type="PIR" id="S58352">
    <property type="entry name" value="S58352"/>
</dbReference>
<dbReference type="RefSeq" id="NP_001264160.1">
    <property type="nucleotide sequence ID" value="NM_001277231.1"/>
</dbReference>
<dbReference type="RefSeq" id="NP_031790.2">
    <property type="nucleotide sequence ID" value="NM_007764.5"/>
</dbReference>
<dbReference type="BMRB" id="P47941"/>
<dbReference type="SMR" id="P47941"/>
<dbReference type="BioGRID" id="198888">
    <property type="interactions" value="28"/>
</dbReference>
<dbReference type="CORUM" id="P47941"/>
<dbReference type="FunCoup" id="P47941">
    <property type="interactions" value="4166"/>
</dbReference>
<dbReference type="IntAct" id="P47941">
    <property type="interactions" value="9"/>
</dbReference>
<dbReference type="MINT" id="P47941"/>
<dbReference type="STRING" id="10090.ENSMUSP00000006293"/>
<dbReference type="GlyGen" id="P47941">
    <property type="glycosylation" value="3 sites, 1 O-linked glycan (1 site)"/>
</dbReference>
<dbReference type="iPTMnet" id="P47941"/>
<dbReference type="PhosphoSitePlus" id="P47941"/>
<dbReference type="SwissPalm" id="P47941"/>
<dbReference type="REPRODUCTION-2DPAGE" id="IPI00113362"/>
<dbReference type="jPOST" id="P47941"/>
<dbReference type="PaxDb" id="10090-ENSMUSP00000006293"/>
<dbReference type="ProteomicsDB" id="278035"/>
<dbReference type="Pumba" id="P47941"/>
<dbReference type="Antibodypedia" id="255">
    <property type="antibodies" value="731 antibodies from 39 providers"/>
</dbReference>
<dbReference type="DNASU" id="12929"/>
<dbReference type="Ensembl" id="ENSMUST00000006293.5">
    <property type="protein sequence ID" value="ENSMUSP00000006293.4"/>
    <property type="gene ID" value="ENSMUSG00000006134.5"/>
</dbReference>
<dbReference type="GeneID" id="12929"/>
<dbReference type="KEGG" id="mmu:12929"/>
<dbReference type="UCSC" id="uc007ykv.2">
    <property type="organism name" value="mouse"/>
</dbReference>
<dbReference type="AGR" id="MGI:104686"/>
<dbReference type="CTD" id="1399"/>
<dbReference type="MGI" id="MGI:104686">
    <property type="gene designation" value="Crkl"/>
</dbReference>
<dbReference type="VEuPathDB" id="HostDB:ENSMUSG00000006134"/>
<dbReference type="eggNOG" id="KOG4792">
    <property type="taxonomic scope" value="Eukaryota"/>
</dbReference>
<dbReference type="GeneTree" id="ENSGT00820000127055"/>
<dbReference type="HOGENOM" id="CLU_060542_0_1_1"/>
<dbReference type="InParanoid" id="P47941"/>
<dbReference type="OMA" id="WYVGPLS"/>
<dbReference type="OrthoDB" id="9204160at2759"/>
<dbReference type="PhylomeDB" id="P47941"/>
<dbReference type="TreeFam" id="TF321436"/>
<dbReference type="Reactome" id="R-MMU-170968">
    <property type="pathway name" value="Frs2-mediated activation"/>
</dbReference>
<dbReference type="Reactome" id="R-MMU-186763">
    <property type="pathway name" value="Downstream signal transduction"/>
</dbReference>
<dbReference type="Reactome" id="R-MMU-8875555">
    <property type="pathway name" value="MET activates RAP1 and RAC1"/>
</dbReference>
<dbReference type="Reactome" id="R-MMU-8875656">
    <property type="pathway name" value="MET receptor recycling"/>
</dbReference>
<dbReference type="Reactome" id="R-MMU-9027284">
    <property type="pathway name" value="Erythropoietin activates RAS"/>
</dbReference>
<dbReference type="Reactome" id="R-MMU-912631">
    <property type="pathway name" value="Regulation of signaling by CBL"/>
</dbReference>
<dbReference type="BioGRID-ORCS" id="12929">
    <property type="hits" value="8 hits in 79 CRISPR screens"/>
</dbReference>
<dbReference type="ChiTaRS" id="Crkl">
    <property type="organism name" value="mouse"/>
</dbReference>
<dbReference type="PRO" id="PR:P47941"/>
<dbReference type="Proteomes" id="UP000000589">
    <property type="component" value="Chromosome 16"/>
</dbReference>
<dbReference type="RNAct" id="P47941">
    <property type="molecule type" value="protein"/>
</dbReference>
<dbReference type="Bgee" id="ENSMUSG00000006134">
    <property type="expression patterns" value="Expressed in rostral migratory stream and 274 other cell types or tissues"/>
</dbReference>
<dbReference type="ExpressionAtlas" id="P47941">
    <property type="expression patterns" value="baseline and differential"/>
</dbReference>
<dbReference type="GO" id="GO:0005829">
    <property type="term" value="C:cytosol"/>
    <property type="evidence" value="ECO:0000304"/>
    <property type="project" value="Reactome"/>
</dbReference>
<dbReference type="GO" id="GO:0098890">
    <property type="term" value="C:extrinsic component of postsynaptic membrane"/>
    <property type="evidence" value="ECO:0000314"/>
    <property type="project" value="SynGO"/>
</dbReference>
<dbReference type="GO" id="GO:0031594">
    <property type="term" value="C:neuromuscular junction"/>
    <property type="evidence" value="ECO:0000314"/>
    <property type="project" value="SynGO"/>
</dbReference>
<dbReference type="GO" id="GO:0005654">
    <property type="term" value="C:nucleoplasm"/>
    <property type="evidence" value="ECO:0007669"/>
    <property type="project" value="Ensembl"/>
</dbReference>
<dbReference type="GO" id="GO:0032991">
    <property type="term" value="C:protein-containing complex"/>
    <property type="evidence" value="ECO:0000314"/>
    <property type="project" value="MGI"/>
</dbReference>
<dbReference type="GO" id="GO:0045202">
    <property type="term" value="C:synapse"/>
    <property type="evidence" value="ECO:0000314"/>
    <property type="project" value="MGI"/>
</dbReference>
<dbReference type="GO" id="GO:0042802">
    <property type="term" value="F:identical protein binding"/>
    <property type="evidence" value="ECO:0007669"/>
    <property type="project" value="Ensembl"/>
</dbReference>
<dbReference type="GO" id="GO:0001784">
    <property type="term" value="F:phosphotyrosine residue binding"/>
    <property type="evidence" value="ECO:0007669"/>
    <property type="project" value="Ensembl"/>
</dbReference>
<dbReference type="GO" id="GO:0061629">
    <property type="term" value="F:RNA polymerase II-specific DNA-binding transcription factor binding"/>
    <property type="evidence" value="ECO:0000266"/>
    <property type="project" value="MGI"/>
</dbReference>
<dbReference type="GO" id="GO:0035591">
    <property type="term" value="F:signaling adaptor activity"/>
    <property type="evidence" value="ECO:0000316"/>
    <property type="project" value="MGI"/>
</dbReference>
<dbReference type="GO" id="GO:0095500">
    <property type="term" value="P:acetylcholine receptor signaling pathway"/>
    <property type="evidence" value="ECO:0000316"/>
    <property type="project" value="MGI"/>
</dbReference>
<dbReference type="GO" id="GO:0009887">
    <property type="term" value="P:animal organ morphogenesis"/>
    <property type="evidence" value="ECO:0000315"/>
    <property type="project" value="MGI"/>
</dbReference>
<dbReference type="GO" id="GO:0009952">
    <property type="term" value="P:anterior/posterior pattern specification"/>
    <property type="evidence" value="ECO:0000316"/>
    <property type="project" value="MGI"/>
</dbReference>
<dbReference type="GO" id="GO:0001783">
    <property type="term" value="P:B cell apoptotic process"/>
    <property type="evidence" value="ECO:0000315"/>
    <property type="project" value="MGI"/>
</dbReference>
<dbReference type="GO" id="GO:0001568">
    <property type="term" value="P:blood vessel development"/>
    <property type="evidence" value="ECO:0000316"/>
    <property type="project" value="MGI"/>
</dbReference>
<dbReference type="GO" id="GO:0060326">
    <property type="term" value="P:cell chemotaxis"/>
    <property type="evidence" value="ECO:0000316"/>
    <property type="project" value="MGI"/>
</dbReference>
<dbReference type="GO" id="GO:0098761">
    <property type="term" value="P:cellular response to interleukin-7"/>
    <property type="evidence" value="ECO:0000314"/>
    <property type="project" value="MGI"/>
</dbReference>
<dbReference type="GO" id="GO:0071560">
    <property type="term" value="P:cellular response to transforming growth factor beta stimulus"/>
    <property type="evidence" value="ECO:0007669"/>
    <property type="project" value="Ensembl"/>
</dbReference>
<dbReference type="GO" id="GO:0071466">
    <property type="term" value="P:cellular response to xenobiotic stimulus"/>
    <property type="evidence" value="ECO:0000314"/>
    <property type="project" value="MGI"/>
</dbReference>
<dbReference type="GO" id="GO:0098749">
    <property type="term" value="P:cerebellar neuron development"/>
    <property type="evidence" value="ECO:0000316"/>
    <property type="project" value="MGI"/>
</dbReference>
<dbReference type="GO" id="GO:0021987">
    <property type="term" value="P:cerebral cortex development"/>
    <property type="evidence" value="ECO:0000316"/>
    <property type="project" value="MGI"/>
</dbReference>
<dbReference type="GO" id="GO:0160093">
    <property type="term" value="P:chordate pharynx development"/>
    <property type="evidence" value="ECO:0000315"/>
    <property type="project" value="MGI"/>
</dbReference>
<dbReference type="GO" id="GO:1904888">
    <property type="term" value="P:cranial skeletal system development"/>
    <property type="evidence" value="ECO:0000315"/>
    <property type="project" value="MGI"/>
</dbReference>
<dbReference type="GO" id="GO:0016358">
    <property type="term" value="P:dendrite development"/>
    <property type="evidence" value="ECO:0000316"/>
    <property type="project" value="MGI"/>
</dbReference>
<dbReference type="GO" id="GO:0086100">
    <property type="term" value="P:endothelin receptor signaling pathway"/>
    <property type="evidence" value="ECO:0000315"/>
    <property type="project" value="MGI"/>
</dbReference>
<dbReference type="GO" id="GO:0007167">
    <property type="term" value="P:enzyme-linked receptor protein signaling pathway"/>
    <property type="evidence" value="ECO:0000314"/>
    <property type="project" value="MGI"/>
</dbReference>
<dbReference type="GO" id="GO:0030010">
    <property type="term" value="P:establishment of cell polarity"/>
    <property type="evidence" value="ECO:0000316"/>
    <property type="project" value="MGI"/>
</dbReference>
<dbReference type="GO" id="GO:0008543">
    <property type="term" value="P:fibroblast growth factor receptor signaling pathway"/>
    <property type="evidence" value="ECO:0000315"/>
    <property type="project" value="MGI"/>
</dbReference>
<dbReference type="GO" id="GO:0007507">
    <property type="term" value="P:heart development"/>
    <property type="evidence" value="ECO:0000316"/>
    <property type="project" value="MGI"/>
</dbReference>
<dbReference type="GO" id="GO:0035685">
    <property type="term" value="P:helper T cell diapedesis"/>
    <property type="evidence" value="ECO:0000316"/>
    <property type="project" value="MGI"/>
</dbReference>
<dbReference type="GO" id="GO:0021766">
    <property type="term" value="P:hippocampus development"/>
    <property type="evidence" value="ECO:0000316"/>
    <property type="project" value="MGI"/>
</dbReference>
<dbReference type="GO" id="GO:0006629">
    <property type="term" value="P:lipid metabolic process"/>
    <property type="evidence" value="ECO:0000316"/>
    <property type="project" value="MGI"/>
</dbReference>
<dbReference type="GO" id="GO:0008584">
    <property type="term" value="P:male gonad development"/>
    <property type="evidence" value="ECO:0000315"/>
    <property type="project" value="MGI"/>
</dbReference>
<dbReference type="GO" id="GO:0010629">
    <property type="term" value="P:negative regulation of gene expression"/>
    <property type="evidence" value="ECO:0007669"/>
    <property type="project" value="Ensembl"/>
</dbReference>
<dbReference type="GO" id="GO:0060392">
    <property type="term" value="P:negative regulation of SMAD protein signal transduction"/>
    <property type="evidence" value="ECO:0007669"/>
    <property type="project" value="Ensembl"/>
</dbReference>
<dbReference type="GO" id="GO:0001764">
    <property type="term" value="P:neuron migration"/>
    <property type="evidence" value="ECO:0000315"/>
    <property type="project" value="MGI"/>
</dbReference>
<dbReference type="GO" id="GO:0003151">
    <property type="term" value="P:outflow tract morphogenesis"/>
    <property type="evidence" value="ECO:0000315"/>
    <property type="project" value="MGI"/>
</dbReference>
<dbReference type="GO" id="GO:0060017">
    <property type="term" value="P:parathyroid gland development"/>
    <property type="evidence" value="ECO:0000316"/>
    <property type="project" value="MGI"/>
</dbReference>
<dbReference type="GO" id="GO:0007389">
    <property type="term" value="P:pattern specification process"/>
    <property type="evidence" value="ECO:0000316"/>
    <property type="project" value="MGI"/>
</dbReference>
<dbReference type="GO" id="GO:0008284">
    <property type="term" value="P:positive regulation of cell population proliferation"/>
    <property type="evidence" value="ECO:0007669"/>
    <property type="project" value="Ensembl"/>
</dbReference>
<dbReference type="GO" id="GO:0070374">
    <property type="term" value="P:positive regulation of ERK1 and ERK2 cascade"/>
    <property type="evidence" value="ECO:0000315"/>
    <property type="project" value="MGI"/>
</dbReference>
<dbReference type="GO" id="GO:1903977">
    <property type="term" value="P:positive regulation of glial cell migration"/>
    <property type="evidence" value="ECO:0007669"/>
    <property type="project" value="Ensembl"/>
</dbReference>
<dbReference type="GO" id="GO:0043410">
    <property type="term" value="P:positive regulation of MAPK cascade"/>
    <property type="evidence" value="ECO:0000314"/>
    <property type="project" value="MGI"/>
</dbReference>
<dbReference type="GO" id="GO:0035022">
    <property type="term" value="P:positive regulation of Rac protein signal transduction"/>
    <property type="evidence" value="ECO:0000315"/>
    <property type="project" value="MGI"/>
</dbReference>
<dbReference type="GO" id="GO:1904395">
    <property type="term" value="P:positive regulation of skeletal muscle acetylcholine-gated channel clustering"/>
    <property type="evidence" value="ECO:0000314"/>
    <property type="project" value="MGI"/>
</dbReference>
<dbReference type="GO" id="GO:1900026">
    <property type="term" value="P:positive regulation of substrate adhesion-dependent cell spreading"/>
    <property type="evidence" value="ECO:0007669"/>
    <property type="project" value="Ensembl"/>
</dbReference>
<dbReference type="GO" id="GO:0098698">
    <property type="term" value="P:postsynaptic specialization assembly"/>
    <property type="evidence" value="ECO:0000314"/>
    <property type="project" value="SynGO"/>
</dbReference>
<dbReference type="GO" id="GO:0038026">
    <property type="term" value="P:reelin-mediated signaling pathway"/>
    <property type="evidence" value="ECO:0000315"/>
    <property type="project" value="MGI"/>
</dbReference>
<dbReference type="GO" id="GO:0033628">
    <property type="term" value="P:regulation of cell adhesion mediated by integrin"/>
    <property type="evidence" value="ECO:0000316"/>
    <property type="project" value="MGI"/>
</dbReference>
<dbReference type="GO" id="GO:0001558">
    <property type="term" value="P:regulation of cell growth"/>
    <property type="evidence" value="ECO:0000314"/>
    <property type="project" value="MGI"/>
</dbReference>
<dbReference type="GO" id="GO:0050773">
    <property type="term" value="P:regulation of dendrite development"/>
    <property type="evidence" value="ECO:0000316"/>
    <property type="project" value="MGI"/>
</dbReference>
<dbReference type="GO" id="GO:0010468">
    <property type="term" value="P:regulation of gene expression"/>
    <property type="evidence" value="ECO:0000315"/>
    <property type="project" value="MGI"/>
</dbReference>
<dbReference type="GO" id="GO:0002685">
    <property type="term" value="P:regulation of leukocyte migration"/>
    <property type="evidence" value="ECO:0000316"/>
    <property type="project" value="MGI"/>
</dbReference>
<dbReference type="GO" id="GO:1904393">
    <property type="term" value="P:regulation of skeletal muscle acetylcholine-gated channel clustering"/>
    <property type="evidence" value="ECO:0000316"/>
    <property type="project" value="MGI"/>
</dbReference>
<dbReference type="GO" id="GO:2000404">
    <property type="term" value="P:regulation of T cell migration"/>
    <property type="evidence" value="ECO:0000316"/>
    <property type="project" value="MGI"/>
</dbReference>
<dbReference type="GO" id="GO:0071774">
    <property type="term" value="P:response to fibroblast growth factor"/>
    <property type="evidence" value="ECO:0000315"/>
    <property type="project" value="MGI"/>
</dbReference>
<dbReference type="GO" id="GO:0048384">
    <property type="term" value="P:retinoic acid receptor signaling pathway"/>
    <property type="evidence" value="ECO:0000315"/>
    <property type="project" value="MGI"/>
</dbReference>
<dbReference type="GO" id="GO:0007338">
    <property type="term" value="P:single fertilization"/>
    <property type="evidence" value="ECO:0000315"/>
    <property type="project" value="MGI"/>
</dbReference>
<dbReference type="GO" id="GO:0007283">
    <property type="term" value="P:spermatogenesis"/>
    <property type="evidence" value="ECO:0000315"/>
    <property type="project" value="MGI"/>
</dbReference>
<dbReference type="GO" id="GO:0050852">
    <property type="term" value="P:T cell receptor signaling pathway"/>
    <property type="evidence" value="ECO:0000314"/>
    <property type="project" value="MGI"/>
</dbReference>
<dbReference type="GO" id="GO:0048538">
    <property type="term" value="P:thymus development"/>
    <property type="evidence" value="ECO:0000316"/>
    <property type="project" value="MGI"/>
</dbReference>
<dbReference type="GO" id="GO:0001655">
    <property type="term" value="P:urogenital system development"/>
    <property type="evidence" value="ECO:0000315"/>
    <property type="project" value="MGI"/>
</dbReference>
<dbReference type="CDD" id="cd09926">
    <property type="entry name" value="SH2_CRK_like"/>
    <property type="match status" value="1"/>
</dbReference>
<dbReference type="CDD" id="cd11759">
    <property type="entry name" value="SH3_CRK_C"/>
    <property type="match status" value="1"/>
</dbReference>
<dbReference type="CDD" id="cd11758">
    <property type="entry name" value="SH3_CRK_N"/>
    <property type="match status" value="1"/>
</dbReference>
<dbReference type="FunFam" id="2.30.30.40:FF:000065">
    <property type="entry name" value="adapter molecule crk isoform X1"/>
    <property type="match status" value="1"/>
</dbReference>
<dbReference type="FunFam" id="3.30.505.10:FF:000026">
    <property type="entry name" value="adapter molecule crk isoform X1"/>
    <property type="match status" value="1"/>
</dbReference>
<dbReference type="FunFam" id="2.30.30.40:FF:000163">
    <property type="entry name" value="crk-like protein isoform X1"/>
    <property type="match status" value="1"/>
</dbReference>
<dbReference type="Gene3D" id="3.30.505.10">
    <property type="entry name" value="SH2 domain"/>
    <property type="match status" value="1"/>
</dbReference>
<dbReference type="Gene3D" id="2.30.30.40">
    <property type="entry name" value="SH3 Domains"/>
    <property type="match status" value="2"/>
</dbReference>
<dbReference type="InterPro" id="IPR035458">
    <property type="entry name" value="CRK_SH3_C"/>
</dbReference>
<dbReference type="InterPro" id="IPR035457">
    <property type="entry name" value="CRK_SH3_N"/>
</dbReference>
<dbReference type="InterPro" id="IPR000980">
    <property type="entry name" value="SH2"/>
</dbReference>
<dbReference type="InterPro" id="IPR036860">
    <property type="entry name" value="SH2_dom_sf"/>
</dbReference>
<dbReference type="InterPro" id="IPR036028">
    <property type="entry name" value="SH3-like_dom_sf"/>
</dbReference>
<dbReference type="InterPro" id="IPR001452">
    <property type="entry name" value="SH3_domain"/>
</dbReference>
<dbReference type="InterPro" id="IPR051184">
    <property type="entry name" value="Tyrosine-phos_adapter"/>
</dbReference>
<dbReference type="PANTHER" id="PTHR19969:SF5">
    <property type="entry name" value="CRK-LIKE PROTEIN"/>
    <property type="match status" value="1"/>
</dbReference>
<dbReference type="PANTHER" id="PTHR19969">
    <property type="entry name" value="SH2-SH3 ADAPTOR PROTEIN-RELATED"/>
    <property type="match status" value="1"/>
</dbReference>
<dbReference type="Pfam" id="PF00017">
    <property type="entry name" value="SH2"/>
    <property type="match status" value="1"/>
</dbReference>
<dbReference type="Pfam" id="PF00018">
    <property type="entry name" value="SH3_1"/>
    <property type="match status" value="1"/>
</dbReference>
<dbReference type="Pfam" id="PF07653">
    <property type="entry name" value="SH3_2"/>
    <property type="match status" value="1"/>
</dbReference>
<dbReference type="PRINTS" id="PR00401">
    <property type="entry name" value="SH2DOMAIN"/>
</dbReference>
<dbReference type="PRINTS" id="PR00452">
    <property type="entry name" value="SH3DOMAIN"/>
</dbReference>
<dbReference type="SMART" id="SM00252">
    <property type="entry name" value="SH2"/>
    <property type="match status" value="1"/>
</dbReference>
<dbReference type="SMART" id="SM00326">
    <property type="entry name" value="SH3"/>
    <property type="match status" value="2"/>
</dbReference>
<dbReference type="SUPFAM" id="SSF55550">
    <property type="entry name" value="SH2 domain"/>
    <property type="match status" value="1"/>
</dbReference>
<dbReference type="SUPFAM" id="SSF50044">
    <property type="entry name" value="SH3-domain"/>
    <property type="match status" value="2"/>
</dbReference>
<dbReference type="PROSITE" id="PS50001">
    <property type="entry name" value="SH2"/>
    <property type="match status" value="1"/>
</dbReference>
<dbReference type="PROSITE" id="PS50002">
    <property type="entry name" value="SH3"/>
    <property type="match status" value="2"/>
</dbReference>